<name>SC4AA_TAKRU</name>
<accession>Q2XVR7</accession>
<reference key="1">
    <citation type="journal article" date="2005" name="Curr. Biol.">
        <title>Genetic basis of tetrodotoxin resistance in pufferfishes.</title>
        <authorList>
            <person name="Venkatesh B."/>
            <person name="Lu S.Q."/>
            <person name="Dandona N."/>
            <person name="See S.L."/>
            <person name="Brenner S."/>
            <person name="Soong T.W."/>
        </authorList>
    </citation>
    <scope>NUCLEOTIDE SEQUENCE [GENOMIC DNA]</scope>
</reference>
<organism>
    <name type="scientific">Takifugu rubripes</name>
    <name type="common">Japanese pufferfish</name>
    <name type="synonym">Fugu rubripes</name>
    <dbReference type="NCBI Taxonomy" id="31033"/>
    <lineage>
        <taxon>Eukaryota</taxon>
        <taxon>Metazoa</taxon>
        <taxon>Chordata</taxon>
        <taxon>Craniata</taxon>
        <taxon>Vertebrata</taxon>
        <taxon>Euteleostomi</taxon>
        <taxon>Actinopterygii</taxon>
        <taxon>Neopterygii</taxon>
        <taxon>Teleostei</taxon>
        <taxon>Neoteleostei</taxon>
        <taxon>Acanthomorphata</taxon>
        <taxon>Eupercaria</taxon>
        <taxon>Tetraodontiformes</taxon>
        <taxon>Tetradontoidea</taxon>
        <taxon>Tetraodontidae</taxon>
        <taxon>Takifugu</taxon>
    </lineage>
</organism>
<sequence>MATILPPPGTALFRHFTRQSLATIERLKEETLIAPKAGAHEEEEPPTPNPDLEAGKSLPMIFGDPPSELLGTPLEDIDPFYKAQKTFVVVTKGNTIYRFNAEPACYILSPFSLVRRGAIKILIHSLFSTLIMITILSNCVFMTMSNPPAWSKTVEYVFTGIYTFEATVKVLSRGFCVGPFTFLRDPWNWLDFMVISMAYITEFVDLGNVSALRTFRVLRALKTITVIPGLKTIVAALIQSVKKMVDVMILTVFALAVFALVGLQLFMGNLRHKCIRWPIANETASELFNGTVFNDTLSYNDTTWLNDTLDSNSTFDFTEYIENAENQYFLEGSKDALLCGNSTDAGKCPEGYLCMKAGRNPNYGYTSFDSFGWAFLALFRLMTQDNWESLFQLTLRAAGQTYMLFFVVVIFLGSFYLINLILAVVAMAYDEQNQASQQEAKEKEEEFQRLLEQLKNQEQAQVLGSRASLTSKKSVSLTGSDVADDEQSLENNEALKDCNGRPIPRLIIRAPTMKESAADYELREKEESSVHSVLHLDEPGLRERSASVATAAASVATAAASVATAAAMEELEEAQRPCPPIWYRFADIFLKWNCCEKWVVFKKWVHFVVMDPFVDLAITICIVLNTLFMAMEHYPMTEEFDYMLSVGNLVFTGIFAAEMFFKLIAMDPYYYFQVGWNIFDSIIVTLSLVELGLANVQGLSVLRSFRLLRVFKLAKSWPTLNMLIKIIGNSVGALGNLTLVLAIIVFIFAVVGMQLFGKSYKDCVCKISSDCELPRWHMNDFFHSFLIVFRILCGEWIETMWDCMEVAGAGMCLVVFMMVMVIGNLVVLNLFLALLLSSFSGDNLSVGDDDGELNNLQIAIGRITRGGNWLKAFLIGTVQRVLGREPQKPAEEDPADEGEGKTEGMEMNHLDGFKLADGIANCLVGGQPSGVTLDGESSITVPIALGESDSENPSEDDDDQEDDVDSEVTCEENEHHSDGVEDEFGVLQHVKLMGALTDGDSSVCSTVDYQPPEPEVQEEEEEEPDLVEPEACFTDNCVKRWPCLNVDISQGKGKKWWNLRKTCFTIVEHDWFETFIIFMILLSSGALAFEDIYIERRRTVKIVLEFADKVFTFIFVIEMLLKWVAYGFKTYFTNAWCWLDFFIVDISLISLSANLMGFSDLGPIKSLRTLRALRPLRALSRFEGMRVVVNALIGAIPSIFNVLLVCLIFWLIFSIMGVNLFAGKFYRCINTTTAELFPISVVNNKSDCVALQEATQEARWVNVKVNYDNVAKGYLSLLQIATFKGWMDIMYPAVDSREVEEQPSYEINLYMYIYFVIFIIFGSFFTLNLFIGVIIDNFNQQKKKLGDKDIFMTEEQKKYYEAMKKLGSKKPQKPIPRPANLIQGLVFDFISQQFFDIFIMVLICLNMVTMMVETDDQSPAKEDFLFKVNVAFIVVFTGECTLKLFALRHYFFTNGWNIFDFIVVILSIAGTMLSDIIEKYFVSPTLFRVIRLARIGRILRLIKGARGIRTLLFALMMSLPALFNIGLLLFLIMFIFSIFGMSNFAYVKKEAGINDMFNFETFGSSIICLFQITTSAGWDTLLLPMLNKEPPDCDPAFENPGTDVKGNCGNPMMGMVFFCSYIIISFLVVVNMYIAIILENFNVAQEESGDVLCEEDFEMFNETWEKFDTGGTQFIEYSQLSDFCDALQEPLRVAKPNRQRLIEMDLPLVIGDRIHCVDVLLAVTQEVLGDTIEMVAMRESIEAKFNLNNPTSASYAPITTTVRQKEEDMAAVVIQRAYRNHLHKRGIHHAAYIQRSKTGRKAASEDAPEKEGLLAKKMGALYGSDADLADEVEGLRRRPDPQTRCSGARCSPEPPEPNIILVPVEITNELLLHSAPSQQSSPTQTILRETNV</sequence>
<comment type="function">
    <text evidence="2">Pore-forming subunit of a voltage-gated sodium (Nav) channel that directly mediates the depolarizing phase of action potentials in excitable membranes. Navs, also called VGSCs (voltage-gated sodium channels) or VDSCs (voltage-dependent sodium channels), operate by switching between closed and open conformations depending on the voltage difference across the membrane. In the open conformation they allow Na(+) ions to selectively pass through the pore, along their electrochemical gradient. The influx of Na+ ions provokes membrane depolarization, initiating the propagation of electrical signals throughout cells and tissues.</text>
</comment>
<comment type="catalytic activity">
    <reaction evidence="2">
        <text>Na(+)(in) = Na(+)(out)</text>
        <dbReference type="Rhea" id="RHEA:34963"/>
        <dbReference type="ChEBI" id="CHEBI:29101"/>
    </reaction>
</comment>
<comment type="subunit">
    <text evidence="2">Voltage-gated sodium (Nav) channels consist of an ion-conducting alpha subunit which is functional on its own associated with regulatory beta subunits.</text>
</comment>
<comment type="subcellular location">
    <subcellularLocation>
        <location evidence="1">Cell membrane</location>
        <topology evidence="2">Multi-pass membrane protein</topology>
    </subcellularLocation>
</comment>
<comment type="domain">
    <text evidence="2">The sequence contains 4 internal repeats, each with 5 hydrophobic segments (S1, S2, S3, S5, S6) and one positively charged segment (S4). Segments S4 are probably the voltage-sensors and are characterized by a series of positively charged amino acids at every third position.</text>
</comment>
<comment type="similarity">
    <text evidence="6">Belongs to the sodium channel (TC 1.A.1.10) family. Nav1.4/SCN4A subfamily.</text>
</comment>
<evidence type="ECO:0000250" key="1">
    <source>
        <dbReference type="UniProtKB" id="P15390"/>
    </source>
</evidence>
<evidence type="ECO:0000250" key="2">
    <source>
        <dbReference type="UniProtKB" id="P35499"/>
    </source>
</evidence>
<evidence type="ECO:0000255" key="3"/>
<evidence type="ECO:0000255" key="4">
    <source>
        <dbReference type="PROSITE-ProRule" id="PRU00116"/>
    </source>
</evidence>
<evidence type="ECO:0000256" key="5">
    <source>
        <dbReference type="SAM" id="MobiDB-lite"/>
    </source>
</evidence>
<evidence type="ECO:0000305" key="6"/>
<proteinExistence type="inferred from homology"/>
<dbReference type="EMBL" id="DQ221249">
    <property type="protein sequence ID" value="ABB29441.1"/>
    <property type="molecule type" value="Genomic_DNA"/>
</dbReference>
<dbReference type="SMR" id="Q2XVR7"/>
<dbReference type="FunCoup" id="Q2XVR7">
    <property type="interactions" value="540"/>
</dbReference>
<dbReference type="STRING" id="31033.ENSTRUP00000060478"/>
<dbReference type="GlyCosmos" id="Q2XVR7">
    <property type="glycosylation" value="6 sites, No reported glycans"/>
</dbReference>
<dbReference type="eggNOG" id="KOG2301">
    <property type="taxonomic scope" value="Eukaryota"/>
</dbReference>
<dbReference type="InParanoid" id="Q2XVR7"/>
<dbReference type="Proteomes" id="UP000005226">
    <property type="component" value="Unplaced"/>
</dbReference>
<dbReference type="GO" id="GO:0001518">
    <property type="term" value="C:voltage-gated sodium channel complex"/>
    <property type="evidence" value="ECO:0007669"/>
    <property type="project" value="InterPro"/>
</dbReference>
<dbReference type="GO" id="GO:0005509">
    <property type="term" value="F:calcium ion binding"/>
    <property type="evidence" value="ECO:0007669"/>
    <property type="project" value="InterPro"/>
</dbReference>
<dbReference type="GO" id="GO:0005248">
    <property type="term" value="F:voltage-gated sodium channel activity"/>
    <property type="evidence" value="ECO:0007669"/>
    <property type="project" value="InterPro"/>
</dbReference>
<dbReference type="GO" id="GO:0086010">
    <property type="term" value="P:membrane depolarization during action potential"/>
    <property type="evidence" value="ECO:0007669"/>
    <property type="project" value="TreeGrafter"/>
</dbReference>
<dbReference type="GO" id="GO:0019228">
    <property type="term" value="P:neuronal action potential"/>
    <property type="evidence" value="ECO:0007669"/>
    <property type="project" value="TreeGrafter"/>
</dbReference>
<dbReference type="CDD" id="cd13433">
    <property type="entry name" value="Na_channel_gate"/>
    <property type="match status" value="1"/>
</dbReference>
<dbReference type="FunFam" id="1.10.238.10:FF:000002">
    <property type="entry name" value="Sodium channel protein"/>
    <property type="match status" value="1"/>
</dbReference>
<dbReference type="FunFam" id="1.10.287.70:FF:000001">
    <property type="entry name" value="Sodium channel protein"/>
    <property type="match status" value="1"/>
</dbReference>
<dbReference type="FunFam" id="1.10.287.70:FF:000006">
    <property type="entry name" value="Sodium channel protein"/>
    <property type="match status" value="1"/>
</dbReference>
<dbReference type="FunFam" id="1.20.120.350:FF:000002">
    <property type="entry name" value="Sodium channel protein"/>
    <property type="match status" value="1"/>
</dbReference>
<dbReference type="FunFam" id="1.20.120.350:FF:000004">
    <property type="entry name" value="Sodium channel protein"/>
    <property type="match status" value="1"/>
</dbReference>
<dbReference type="FunFam" id="1.20.120.350:FF:000005">
    <property type="entry name" value="Sodium channel protein"/>
    <property type="match status" value="1"/>
</dbReference>
<dbReference type="FunFam" id="1.20.120.350:FF:000003">
    <property type="entry name" value="Voltage-dependent sodium channel"/>
    <property type="match status" value="1"/>
</dbReference>
<dbReference type="Gene3D" id="1.10.287.70">
    <property type="match status" value="4"/>
</dbReference>
<dbReference type="Gene3D" id="1.10.238.10">
    <property type="entry name" value="EF-hand"/>
    <property type="match status" value="1"/>
</dbReference>
<dbReference type="Gene3D" id="1.20.5.1190">
    <property type="entry name" value="iswi atpase"/>
    <property type="match status" value="1"/>
</dbReference>
<dbReference type="Gene3D" id="1.20.120.350">
    <property type="entry name" value="Voltage-gated potassium channels. Chain C"/>
    <property type="match status" value="4"/>
</dbReference>
<dbReference type="InterPro" id="IPR002048">
    <property type="entry name" value="EF_hand_dom"/>
</dbReference>
<dbReference type="InterPro" id="IPR005821">
    <property type="entry name" value="Ion_trans_dom"/>
</dbReference>
<dbReference type="InterPro" id="IPR001696">
    <property type="entry name" value="Na_channel_asu"/>
</dbReference>
<dbReference type="InterPro" id="IPR044564">
    <property type="entry name" value="Na_chnl_inactivation_gate"/>
</dbReference>
<dbReference type="InterPro" id="IPR010526">
    <property type="entry name" value="Na_trans_assoc_dom"/>
</dbReference>
<dbReference type="InterPro" id="IPR043203">
    <property type="entry name" value="VGCC_Ca_Na"/>
</dbReference>
<dbReference type="InterPro" id="IPR027359">
    <property type="entry name" value="Volt_channel_dom_sf"/>
</dbReference>
<dbReference type="PANTHER" id="PTHR10037:SF223">
    <property type="entry name" value="SODIUM CHANNEL PROTEIN TYPE 4 SUBUNIT ALPHA"/>
    <property type="match status" value="1"/>
</dbReference>
<dbReference type="PANTHER" id="PTHR10037">
    <property type="entry name" value="VOLTAGE-GATED CATION CHANNEL CALCIUM AND SODIUM"/>
    <property type="match status" value="1"/>
</dbReference>
<dbReference type="Pfam" id="PF00520">
    <property type="entry name" value="Ion_trans"/>
    <property type="match status" value="4"/>
</dbReference>
<dbReference type="Pfam" id="PF24609">
    <property type="entry name" value="IQ_SCN5A_C"/>
    <property type="match status" value="1"/>
</dbReference>
<dbReference type="Pfam" id="PF06512">
    <property type="entry name" value="Na_trans_assoc"/>
    <property type="match status" value="1"/>
</dbReference>
<dbReference type="PRINTS" id="PR00170">
    <property type="entry name" value="NACHANNEL"/>
</dbReference>
<dbReference type="SUPFAM" id="SSF81324">
    <property type="entry name" value="Voltage-gated potassium channels"/>
    <property type="match status" value="4"/>
</dbReference>
<dbReference type="PROSITE" id="PS50096">
    <property type="entry name" value="IQ"/>
    <property type="match status" value="1"/>
</dbReference>
<protein>
    <recommendedName>
        <fullName>Sodium channel protein type 4 subunit alpha A</fullName>
    </recommendedName>
    <alternativeName>
        <fullName>Voltage-gated sodium channel subunit alpha Nav1.4a</fullName>
    </alternativeName>
</protein>
<gene>
    <name type="primary">scn4aa</name>
    <name type="synonym">nav1.4a</name>
</gene>
<keyword id="KW-1003">Cell membrane</keyword>
<keyword id="KW-1015">Disulfide bond</keyword>
<keyword id="KW-0325">Glycoprotein</keyword>
<keyword id="KW-0407">Ion channel</keyword>
<keyword id="KW-0406">Ion transport</keyword>
<keyword id="KW-0472">Membrane</keyword>
<keyword id="KW-1185">Reference proteome</keyword>
<keyword id="KW-0677">Repeat</keyword>
<keyword id="KW-0915">Sodium</keyword>
<keyword id="KW-0894">Sodium channel</keyword>
<keyword id="KW-0739">Sodium transport</keyword>
<keyword id="KW-0812">Transmembrane</keyword>
<keyword id="KW-1133">Transmembrane helix</keyword>
<keyword id="KW-0813">Transport</keyword>
<keyword id="KW-0851">Voltage-gated channel</keyword>
<feature type="chain" id="PRO_0000371319" description="Sodium channel protein type 4 subunit alpha A">
    <location>
        <begin position="1"/>
        <end position="1892"/>
    </location>
</feature>
<feature type="topological domain" description="Cytoplasmic" evidence="6">
    <location>
        <begin position="1"/>
        <end position="125"/>
    </location>
</feature>
<feature type="transmembrane region" description="Helical; Name=S1 of repeat I" evidence="2">
    <location>
        <begin position="126"/>
        <end position="144"/>
    </location>
</feature>
<feature type="topological domain" description="Extracellular" evidence="6">
    <location>
        <begin position="145"/>
        <end position="151"/>
    </location>
</feature>
<feature type="transmembrane region" description="Helical; Name=S2 of repeat I" evidence="2">
    <location>
        <begin position="152"/>
        <end position="172"/>
    </location>
</feature>
<feature type="topological domain" description="Cytoplasmic" evidence="6">
    <location>
        <begin position="173"/>
        <end position="186"/>
    </location>
</feature>
<feature type="transmembrane region" description="Helical; Name=S3 of repeat I" evidence="2">
    <location>
        <begin position="187"/>
        <end position="204"/>
    </location>
</feature>
<feature type="topological domain" description="Extracellular" evidence="6">
    <location>
        <begin position="205"/>
        <end position="210"/>
    </location>
</feature>
<feature type="transmembrane region" description="Helical; Name=S4 of repeat I" evidence="2">
    <location>
        <begin position="211"/>
        <end position="227"/>
    </location>
</feature>
<feature type="topological domain" description="Cytoplasmic" evidence="6">
    <location>
        <begin position="228"/>
        <end position="246"/>
    </location>
</feature>
<feature type="transmembrane region" description="Helical; Name=S5 of repeat I" evidence="2">
    <location>
        <begin position="247"/>
        <end position="266"/>
    </location>
</feature>
<feature type="topological domain" description="Extracellular" evidence="6">
    <location>
        <begin position="267"/>
        <end position="370"/>
    </location>
</feature>
<feature type="intramembrane region" description="Pore-forming" evidence="2">
    <location>
        <begin position="371"/>
        <end position="395"/>
    </location>
</feature>
<feature type="topological domain" description="Extracellular" evidence="6">
    <location>
        <begin position="396"/>
        <end position="402"/>
    </location>
</feature>
<feature type="transmembrane region" description="Helical; Name=S6 of repeat I" evidence="2">
    <location>
        <begin position="403"/>
        <end position="423"/>
    </location>
</feature>
<feature type="topological domain" description="Cytoplasmic" evidence="6">
    <location>
        <begin position="424"/>
        <end position="612"/>
    </location>
</feature>
<feature type="transmembrane region" description="Helical; Name=S1 of repeat II" evidence="2">
    <location>
        <begin position="613"/>
        <end position="631"/>
    </location>
</feature>
<feature type="topological domain" description="Extracellular" evidence="6">
    <location>
        <begin position="632"/>
        <end position="642"/>
    </location>
</feature>
<feature type="transmembrane region" description="Helical; Name=S2 of repeat II" evidence="2">
    <location>
        <begin position="643"/>
        <end position="662"/>
    </location>
</feature>
<feature type="topological domain" description="Cytoplasmic" evidence="6">
    <location>
        <begin position="663"/>
        <end position="676"/>
    </location>
</feature>
<feature type="transmembrane region" description="Helical; Name=S3 of repeat II" evidence="2">
    <location>
        <begin position="677"/>
        <end position="696"/>
    </location>
</feature>
<feature type="topological domain" description="Extracellular" evidence="6">
    <location>
        <begin position="697"/>
        <end position="698"/>
    </location>
</feature>
<feature type="transmembrane region" description="Helical; Name=S4 of repeat II" evidence="2">
    <location>
        <begin position="699"/>
        <end position="716"/>
    </location>
</feature>
<feature type="topological domain" description="Cytoplasmic" evidence="6">
    <location>
        <begin position="717"/>
        <end position="732"/>
    </location>
</feature>
<feature type="transmembrane region" description="Helical; Name=S5 of repeat II" evidence="2">
    <location>
        <begin position="733"/>
        <end position="751"/>
    </location>
</feature>
<feature type="topological domain" description="Extracellular" evidence="6">
    <location>
        <begin position="752"/>
        <end position="780"/>
    </location>
</feature>
<feature type="intramembrane region" description="Pore-forming" evidence="2">
    <location>
        <begin position="781"/>
        <end position="801"/>
    </location>
</feature>
<feature type="topological domain" description="Extracellular" evidence="6">
    <location>
        <begin position="802"/>
        <end position="812"/>
    </location>
</feature>
<feature type="transmembrane region" description="Helical; Name=S6 of repeat II" evidence="2">
    <location>
        <begin position="813"/>
        <end position="831"/>
    </location>
</feature>
<feature type="topological domain" description="Cytoplasmic" evidence="6">
    <location>
        <begin position="832"/>
        <end position="1071"/>
    </location>
</feature>
<feature type="transmembrane region" description="Helical; Name=S1 of repeat III" evidence="2">
    <location>
        <begin position="1072"/>
        <end position="1089"/>
    </location>
</feature>
<feature type="topological domain" description="Extracellular" evidence="6">
    <location>
        <begin position="1090"/>
        <end position="1102"/>
    </location>
</feature>
<feature type="transmembrane region" description="Helical; Name=S2 of repeat III" evidence="2">
    <location>
        <begin position="1103"/>
        <end position="1121"/>
    </location>
</feature>
<feature type="topological domain" description="Cytoplasmic" evidence="6">
    <location>
        <begin position="1122"/>
        <end position="1135"/>
    </location>
</feature>
<feature type="transmembrane region" description="Helical; Name=S3 of repeat III" evidence="2">
    <location>
        <begin position="1136"/>
        <end position="1154"/>
    </location>
</feature>
<feature type="topological domain" description="Extracellular" evidence="6">
    <location>
        <begin position="1155"/>
        <end position="1162"/>
    </location>
</feature>
<feature type="transmembrane region" description="Helical; Name=S4 of repeat III" evidence="2">
    <location>
        <begin position="1163"/>
        <end position="1181"/>
    </location>
</feature>
<feature type="topological domain" description="Cytoplasmic" evidence="6">
    <location>
        <begin position="1182"/>
        <end position="1198"/>
    </location>
</feature>
<feature type="transmembrane region" description="Helical; Name=S5 of repeat III" evidence="2">
    <location>
        <begin position="1199"/>
        <end position="1218"/>
    </location>
</feature>
<feature type="topological domain" description="Extracellular" evidence="6">
    <location>
        <begin position="1219"/>
        <end position="1270"/>
    </location>
</feature>
<feature type="intramembrane region" description="Pore-forming" evidence="2">
    <location>
        <begin position="1271"/>
        <end position="1292"/>
    </location>
</feature>
<feature type="topological domain" description="Extracellular" evidence="6">
    <location>
        <begin position="1293"/>
        <end position="1309"/>
    </location>
</feature>
<feature type="transmembrane region" description="Helical; Name=S6 of repeat III" evidence="2">
    <location>
        <begin position="1310"/>
        <end position="1331"/>
    </location>
</feature>
<feature type="topological domain" description="Cytoplasmic" evidence="6">
    <location>
        <begin position="1332"/>
        <end position="1394"/>
    </location>
</feature>
<feature type="transmembrane region" description="Helical; Name=S1 of repeat IV" evidence="2">
    <location>
        <begin position="1395"/>
        <end position="1412"/>
    </location>
</feature>
<feature type="topological domain" description="Extracellular" evidence="6">
    <location>
        <begin position="1413"/>
        <end position="1423"/>
    </location>
</feature>
<feature type="transmembrane region" description="Helical; Name=S2 of repeat IV" evidence="2">
    <location>
        <begin position="1424"/>
        <end position="1442"/>
    </location>
</feature>
<feature type="topological domain" description="Cytoplasmic" evidence="6">
    <location>
        <begin position="1443"/>
        <end position="1454"/>
    </location>
</feature>
<feature type="transmembrane region" description="Helical; Name=S3 of repeat IV" evidence="2">
    <location>
        <begin position="1455"/>
        <end position="1472"/>
    </location>
</feature>
<feature type="topological domain" description="Extracellular" evidence="6">
    <location>
        <begin position="1473"/>
        <end position="1485"/>
    </location>
</feature>
<feature type="transmembrane region" description="Helical; Name=S4 of repeat IV" evidence="2">
    <location>
        <begin position="1486"/>
        <end position="1502"/>
    </location>
</feature>
<feature type="topological domain" description="Cytoplasmic" evidence="6">
    <location>
        <begin position="1503"/>
        <end position="1521"/>
    </location>
</feature>
<feature type="transmembrane region" description="Helical; Name=S5 of repeat IV" evidence="2">
    <location>
        <begin position="1522"/>
        <end position="1539"/>
    </location>
</feature>
<feature type="topological domain" description="Extracellular" evidence="6">
    <location>
        <begin position="1540"/>
        <end position="1561"/>
    </location>
</feature>
<feature type="intramembrane region" description="Pore-forming" evidence="2">
    <location>
        <begin position="1562"/>
        <end position="1584"/>
    </location>
</feature>
<feature type="topological domain" description="Extracellular" evidence="6">
    <location>
        <begin position="1585"/>
        <end position="1614"/>
    </location>
</feature>
<feature type="transmembrane region" description="Helical; Name=S6 of repeat IV" evidence="2">
    <location>
        <begin position="1615"/>
        <end position="1637"/>
    </location>
</feature>
<feature type="topological domain" description="Cytoplasmic" evidence="6">
    <location>
        <begin position="1638"/>
        <end position="1892"/>
    </location>
</feature>
<feature type="repeat" description="I" evidence="6">
    <location>
        <begin position="107"/>
        <end position="433"/>
    </location>
</feature>
<feature type="repeat" description="II" evidence="6">
    <location>
        <begin position="594"/>
        <end position="866"/>
    </location>
</feature>
<feature type="repeat" description="III" evidence="6">
    <location>
        <begin position="1052"/>
        <end position="1366"/>
    </location>
</feature>
<feature type="repeat" description="IV" evidence="6">
    <location>
        <begin position="1375"/>
        <end position="1673"/>
    </location>
</feature>
<feature type="domain" description="IQ" evidence="4">
    <location>
        <begin position="1767"/>
        <end position="1796"/>
    </location>
</feature>
<feature type="region of interest" description="Disordered" evidence="5">
    <location>
        <begin position="34"/>
        <end position="54"/>
    </location>
</feature>
<feature type="region of interest" description="Disordered" evidence="5">
    <location>
        <begin position="884"/>
        <end position="905"/>
    </location>
</feature>
<feature type="region of interest" description="Disordered" evidence="5">
    <location>
        <begin position="945"/>
        <end position="982"/>
    </location>
</feature>
<feature type="region of interest" description="Important for rapid channel inactivation" evidence="1">
    <location>
        <begin position="1350"/>
        <end position="1352"/>
    </location>
</feature>
<feature type="region of interest" description="Disordered" evidence="5">
    <location>
        <begin position="1836"/>
        <end position="1856"/>
    </location>
</feature>
<feature type="compositionally biased region" description="Acidic residues" evidence="5">
    <location>
        <begin position="948"/>
        <end position="971"/>
    </location>
</feature>
<feature type="glycosylation site" description="N-linked (GlcNAc...) asparagine" evidence="3">
    <location>
        <position position="208"/>
    </location>
</feature>
<feature type="glycosylation site" description="N-linked (GlcNAc...) asparagine" evidence="3">
    <location>
        <position position="281"/>
    </location>
</feature>
<feature type="glycosylation site" description="N-linked (GlcNAc...) asparagine" evidence="3">
    <location>
        <position position="294"/>
    </location>
</feature>
<feature type="glycosylation site" description="N-linked (GlcNAc...) asparagine" evidence="3">
    <location>
        <position position="341"/>
    </location>
</feature>
<feature type="glycosylation site" description="N-linked (GlcNAc...) asparagine" evidence="3">
    <location>
        <position position="1230"/>
    </location>
</feature>
<feature type="glycosylation site" description="N-linked (GlcNAc...) asparagine" evidence="3">
    <location>
        <position position="1244"/>
    </location>
</feature>
<feature type="disulfide bond" evidence="2">
    <location>
        <begin position="274"/>
        <end position="339"/>
    </location>
</feature>
<feature type="disulfide bond" evidence="2">
    <location>
        <begin position="348"/>
        <end position="354"/>
    </location>
</feature>
<feature type="disulfide bond" evidence="2">
    <location>
        <begin position="765"/>
        <end position="771"/>
    </location>
</feature>
<feature type="disulfide bond" evidence="2">
    <location>
        <begin position="803"/>
        <end position="812"/>
    </location>
</feature>
<feature type="disulfide bond" evidence="2">
    <location>
        <begin position="1228"/>
        <end position="1248"/>
    </location>
</feature>
<feature type="disulfide bond" evidence="2">
    <location>
        <begin position="1593"/>
        <end position="1608"/>
    </location>
</feature>